<evidence type="ECO:0000255" key="1">
    <source>
        <dbReference type="HAMAP-Rule" id="MF_00067"/>
    </source>
</evidence>
<keyword id="KW-0119">Carbohydrate metabolism</keyword>
<keyword id="KW-0963">Cytoplasm</keyword>
<keyword id="KW-0413">Isomerase</keyword>
<keyword id="KW-0479">Metal-binding</keyword>
<keyword id="KW-1185">Reference proteome</keyword>
<keyword id="KW-0862">Zinc</keyword>
<feature type="chain" id="PRO_1000009046" description="Phosphoheptose isomerase">
    <location>
        <begin position="1"/>
        <end position="194"/>
    </location>
</feature>
<feature type="domain" description="SIS" evidence="1">
    <location>
        <begin position="37"/>
        <end position="194"/>
    </location>
</feature>
<feature type="binding site" evidence="1">
    <location>
        <begin position="52"/>
        <end position="54"/>
    </location>
    <ligand>
        <name>substrate</name>
    </ligand>
</feature>
<feature type="binding site" evidence="1">
    <location>
        <position position="61"/>
    </location>
    <ligand>
        <name>Zn(2+)</name>
        <dbReference type="ChEBI" id="CHEBI:29105"/>
    </ligand>
</feature>
<feature type="binding site" evidence="1">
    <location>
        <position position="65"/>
    </location>
    <ligand>
        <name>substrate</name>
    </ligand>
</feature>
<feature type="binding site" evidence="1">
    <location>
        <position position="65"/>
    </location>
    <ligand>
        <name>Zn(2+)</name>
        <dbReference type="ChEBI" id="CHEBI:29105"/>
    </ligand>
</feature>
<feature type="binding site" evidence="1">
    <location>
        <begin position="93"/>
        <end position="94"/>
    </location>
    <ligand>
        <name>substrate</name>
    </ligand>
</feature>
<feature type="binding site" evidence="1">
    <location>
        <begin position="119"/>
        <end position="121"/>
    </location>
    <ligand>
        <name>substrate</name>
    </ligand>
</feature>
<feature type="binding site" evidence="1">
    <location>
        <position position="124"/>
    </location>
    <ligand>
        <name>substrate</name>
    </ligand>
</feature>
<feature type="binding site" evidence="1">
    <location>
        <position position="172"/>
    </location>
    <ligand>
        <name>substrate</name>
    </ligand>
</feature>
<feature type="binding site" evidence="1">
    <location>
        <position position="172"/>
    </location>
    <ligand>
        <name>Zn(2+)</name>
        <dbReference type="ChEBI" id="CHEBI:29105"/>
    </ligand>
</feature>
<feature type="binding site" evidence="1">
    <location>
        <position position="180"/>
    </location>
    <ligand>
        <name>Zn(2+)</name>
        <dbReference type="ChEBI" id="CHEBI:29105"/>
    </ligand>
</feature>
<protein>
    <recommendedName>
        <fullName evidence="1">Phosphoheptose isomerase</fullName>
        <ecNumber evidence="1">5.3.1.28</ecNumber>
    </recommendedName>
    <alternativeName>
        <fullName evidence="1">Sedoheptulose 7-phosphate isomerase</fullName>
    </alternativeName>
</protein>
<reference key="1">
    <citation type="journal article" date="2008" name="J. Bacteriol.">
        <title>The complete genome sequence of Actinobacillus pleuropneumoniae L20 (serotype 5b).</title>
        <authorList>
            <person name="Foote S.J."/>
            <person name="Bosse J.T."/>
            <person name="Bouevitch A.B."/>
            <person name="Langford P.R."/>
            <person name="Young N.M."/>
            <person name="Nash J.H.E."/>
        </authorList>
    </citation>
    <scope>NUCLEOTIDE SEQUENCE [LARGE SCALE GENOMIC DNA]</scope>
    <source>
        <strain>L20</strain>
    </source>
</reference>
<sequence>MYLAQIKAELQEAADVLDKFMSDEKNIQLIQDAALLISNSFKQGGKVLSCGNGGSHCDAMHFAEELTGRYRENRPGYPAIAISDVSHLSCVSNDFGYEYVFSRYLEAVGQKGDVLFGLSTSGNSKNVLNAIKVAKEKGMKVIAMTGKDGGQMAGLADVEIRVPHFRYADRTQEIHIKVIHILMMLIEFEMAKQA</sequence>
<name>GMHA_ACTP2</name>
<comment type="function">
    <text evidence="1">Catalyzes the isomerization of sedoheptulose 7-phosphate in D-glycero-D-manno-heptose 7-phosphate.</text>
</comment>
<comment type="catalytic activity">
    <reaction evidence="1">
        <text>2 D-sedoheptulose 7-phosphate = D-glycero-alpha-D-manno-heptose 7-phosphate + D-glycero-beta-D-manno-heptose 7-phosphate</text>
        <dbReference type="Rhea" id="RHEA:27489"/>
        <dbReference type="ChEBI" id="CHEBI:57483"/>
        <dbReference type="ChEBI" id="CHEBI:60203"/>
        <dbReference type="ChEBI" id="CHEBI:60204"/>
        <dbReference type="EC" id="5.3.1.28"/>
    </reaction>
</comment>
<comment type="cofactor">
    <cofactor evidence="1">
        <name>Zn(2+)</name>
        <dbReference type="ChEBI" id="CHEBI:29105"/>
    </cofactor>
    <text evidence="1">Binds 1 zinc ion per subunit.</text>
</comment>
<comment type="pathway">
    <text evidence="1">Carbohydrate biosynthesis; D-glycero-D-manno-heptose 7-phosphate biosynthesis; D-glycero-alpha-D-manno-heptose 7-phosphate and D-glycero-beta-D-manno-heptose 7-phosphate from sedoheptulose 7-phosphate: step 1/1.</text>
</comment>
<comment type="subunit">
    <text evidence="1">Homotetramer.</text>
</comment>
<comment type="subcellular location">
    <subcellularLocation>
        <location evidence="1">Cytoplasm</location>
    </subcellularLocation>
</comment>
<comment type="miscellaneous">
    <text evidence="1">The reaction produces a racemic mixture of D-glycero-alpha-D-manno-heptose 7-phosphate and D-glycero-beta-D-manno-heptose 7-phosphate.</text>
</comment>
<comment type="similarity">
    <text evidence="1">Belongs to the SIS family. GmhA subfamily.</text>
</comment>
<proteinExistence type="inferred from homology"/>
<gene>
    <name evidence="1" type="primary">gmhA</name>
    <name type="ordered locus">APL_0798</name>
</gene>
<organism>
    <name type="scientific">Actinobacillus pleuropneumoniae serotype 5b (strain L20)</name>
    <dbReference type="NCBI Taxonomy" id="416269"/>
    <lineage>
        <taxon>Bacteria</taxon>
        <taxon>Pseudomonadati</taxon>
        <taxon>Pseudomonadota</taxon>
        <taxon>Gammaproteobacteria</taxon>
        <taxon>Pasteurellales</taxon>
        <taxon>Pasteurellaceae</taxon>
        <taxon>Actinobacillus</taxon>
    </lineage>
</organism>
<accession>A3N0F8</accession>
<dbReference type="EC" id="5.3.1.28" evidence="1"/>
<dbReference type="EMBL" id="CP000569">
    <property type="protein sequence ID" value="ABN73894.1"/>
    <property type="molecule type" value="Genomic_DNA"/>
</dbReference>
<dbReference type="SMR" id="A3N0F8"/>
<dbReference type="STRING" id="416269.APL_0798"/>
<dbReference type="EnsemblBacteria" id="ABN73894">
    <property type="protein sequence ID" value="ABN73894"/>
    <property type="gene ID" value="APL_0798"/>
</dbReference>
<dbReference type="KEGG" id="apl:APL_0798"/>
<dbReference type="eggNOG" id="COG0279">
    <property type="taxonomic scope" value="Bacteria"/>
</dbReference>
<dbReference type="HOGENOM" id="CLU_080999_4_0_6"/>
<dbReference type="UniPathway" id="UPA00041">
    <property type="reaction ID" value="UER00436"/>
</dbReference>
<dbReference type="Proteomes" id="UP000001432">
    <property type="component" value="Chromosome"/>
</dbReference>
<dbReference type="GO" id="GO:0005737">
    <property type="term" value="C:cytoplasm"/>
    <property type="evidence" value="ECO:0007669"/>
    <property type="project" value="UniProtKB-SubCell"/>
</dbReference>
<dbReference type="GO" id="GO:0097367">
    <property type="term" value="F:carbohydrate derivative binding"/>
    <property type="evidence" value="ECO:0007669"/>
    <property type="project" value="InterPro"/>
</dbReference>
<dbReference type="GO" id="GO:0008968">
    <property type="term" value="F:D-sedoheptulose 7-phosphate isomerase activity"/>
    <property type="evidence" value="ECO:0007669"/>
    <property type="project" value="UniProtKB-UniRule"/>
</dbReference>
<dbReference type="GO" id="GO:0008270">
    <property type="term" value="F:zinc ion binding"/>
    <property type="evidence" value="ECO:0007669"/>
    <property type="project" value="UniProtKB-UniRule"/>
</dbReference>
<dbReference type="GO" id="GO:0005975">
    <property type="term" value="P:carbohydrate metabolic process"/>
    <property type="evidence" value="ECO:0007669"/>
    <property type="project" value="UniProtKB-UniRule"/>
</dbReference>
<dbReference type="GO" id="GO:2001061">
    <property type="term" value="P:D-glycero-D-manno-heptose 7-phosphate biosynthetic process"/>
    <property type="evidence" value="ECO:0007669"/>
    <property type="project" value="UniProtKB-UniPathway"/>
</dbReference>
<dbReference type="CDD" id="cd05006">
    <property type="entry name" value="SIS_GmhA"/>
    <property type="match status" value="1"/>
</dbReference>
<dbReference type="Gene3D" id="3.40.50.10490">
    <property type="entry name" value="Glucose-6-phosphate isomerase like protein, domain 1"/>
    <property type="match status" value="1"/>
</dbReference>
<dbReference type="HAMAP" id="MF_00067">
    <property type="entry name" value="GmhA"/>
    <property type="match status" value="1"/>
</dbReference>
<dbReference type="InterPro" id="IPR035461">
    <property type="entry name" value="GmhA/DiaA"/>
</dbReference>
<dbReference type="InterPro" id="IPR004515">
    <property type="entry name" value="Phosphoheptose_Isoase"/>
</dbReference>
<dbReference type="InterPro" id="IPR001347">
    <property type="entry name" value="SIS_dom"/>
</dbReference>
<dbReference type="InterPro" id="IPR046348">
    <property type="entry name" value="SIS_dom_sf"/>
</dbReference>
<dbReference type="InterPro" id="IPR050099">
    <property type="entry name" value="SIS_GmhA/DiaA_subfam"/>
</dbReference>
<dbReference type="NCBIfam" id="TIGR00441">
    <property type="entry name" value="gmhA"/>
    <property type="match status" value="1"/>
</dbReference>
<dbReference type="NCBIfam" id="NF001628">
    <property type="entry name" value="PRK00414.1"/>
    <property type="match status" value="1"/>
</dbReference>
<dbReference type="PANTHER" id="PTHR30390:SF7">
    <property type="entry name" value="PHOSPHOHEPTOSE ISOMERASE"/>
    <property type="match status" value="1"/>
</dbReference>
<dbReference type="PANTHER" id="PTHR30390">
    <property type="entry name" value="SEDOHEPTULOSE 7-PHOSPHATE ISOMERASE / DNAA INITIATOR-ASSOCIATING FACTOR FOR REPLICATION INITIATION"/>
    <property type="match status" value="1"/>
</dbReference>
<dbReference type="Pfam" id="PF13580">
    <property type="entry name" value="SIS_2"/>
    <property type="match status" value="1"/>
</dbReference>
<dbReference type="SUPFAM" id="SSF53697">
    <property type="entry name" value="SIS domain"/>
    <property type="match status" value="1"/>
</dbReference>
<dbReference type="PROSITE" id="PS51464">
    <property type="entry name" value="SIS"/>
    <property type="match status" value="1"/>
</dbReference>